<dbReference type="EC" id="7.1.1.1" evidence="2"/>
<dbReference type="EMBL" id="U01158">
    <property type="protein sequence ID" value="AAC43255.1"/>
    <property type="molecule type" value="Genomic_DNA"/>
</dbReference>
<dbReference type="PIR" id="S69123">
    <property type="entry name" value="S69123"/>
</dbReference>
<dbReference type="RefSeq" id="WP_011390032.1">
    <property type="nucleotide sequence ID" value="NZ_DAMDTZ010000090.1"/>
</dbReference>
<dbReference type="SMR" id="P0C186"/>
<dbReference type="TCDB" id="3.D.2.2.1">
    <property type="family name" value="the proton-translocating transhydrogenase (pth) family"/>
</dbReference>
<dbReference type="OMA" id="LDRYFPM"/>
<dbReference type="GO" id="GO:0005886">
    <property type="term" value="C:plasma membrane"/>
    <property type="evidence" value="ECO:0007669"/>
    <property type="project" value="TreeGrafter"/>
</dbReference>
<dbReference type="GO" id="GO:0051287">
    <property type="term" value="F:NAD binding"/>
    <property type="evidence" value="ECO:0000250"/>
    <property type="project" value="UniProtKB"/>
</dbReference>
<dbReference type="GO" id="GO:0070403">
    <property type="term" value="F:NAD+ binding"/>
    <property type="evidence" value="ECO:0000250"/>
    <property type="project" value="UniProtKB"/>
</dbReference>
<dbReference type="GO" id="GO:0070404">
    <property type="term" value="F:NADH binding"/>
    <property type="evidence" value="ECO:0000250"/>
    <property type="project" value="UniProtKB"/>
</dbReference>
<dbReference type="GO" id="GO:0050661">
    <property type="term" value="F:NADP binding"/>
    <property type="evidence" value="ECO:0007669"/>
    <property type="project" value="TreeGrafter"/>
</dbReference>
<dbReference type="GO" id="GO:0016491">
    <property type="term" value="F:oxidoreductase activity"/>
    <property type="evidence" value="ECO:0007669"/>
    <property type="project" value="InterPro"/>
</dbReference>
<dbReference type="GO" id="GO:0008750">
    <property type="term" value="F:proton-translocating NAD(P)+ transhydrogenase activity"/>
    <property type="evidence" value="ECO:0000250"/>
    <property type="project" value="UniProtKB"/>
</dbReference>
<dbReference type="GO" id="GO:0006740">
    <property type="term" value="P:NADPH regeneration"/>
    <property type="evidence" value="ECO:0000250"/>
    <property type="project" value="UniProtKB"/>
</dbReference>
<dbReference type="CDD" id="cd05304">
    <property type="entry name" value="Rubrum_tdh"/>
    <property type="match status" value="1"/>
</dbReference>
<dbReference type="FunFam" id="3.40.50.720:FF:000188">
    <property type="entry name" value="NAD(P) transhydrogenase alpha subunit 1"/>
    <property type="match status" value="1"/>
</dbReference>
<dbReference type="Gene3D" id="3.40.50.720">
    <property type="entry name" value="NAD(P)-binding Rossmann-like Domain"/>
    <property type="match status" value="2"/>
</dbReference>
<dbReference type="InterPro" id="IPR008143">
    <property type="entry name" value="Ala_DH/PNT_CS2"/>
</dbReference>
<dbReference type="InterPro" id="IPR008142">
    <property type="entry name" value="AlaDH/PNT_CS1"/>
</dbReference>
<dbReference type="InterPro" id="IPR007886">
    <property type="entry name" value="AlaDH/PNT_N"/>
</dbReference>
<dbReference type="InterPro" id="IPR007698">
    <property type="entry name" value="AlaDH/PNT_NAD(H)-bd"/>
</dbReference>
<dbReference type="InterPro" id="IPR036291">
    <property type="entry name" value="NAD(P)-bd_dom_sf"/>
</dbReference>
<dbReference type="NCBIfam" id="NF006942">
    <property type="entry name" value="PRK09424.1"/>
    <property type="match status" value="1"/>
</dbReference>
<dbReference type="PANTHER" id="PTHR10160">
    <property type="entry name" value="NAD(P) TRANSHYDROGENASE"/>
    <property type="match status" value="1"/>
</dbReference>
<dbReference type="PANTHER" id="PTHR10160:SF19">
    <property type="entry name" value="PROTON-TRANSLOCATING NAD(P)(+) TRANSHYDROGENASE"/>
    <property type="match status" value="1"/>
</dbReference>
<dbReference type="Pfam" id="PF01262">
    <property type="entry name" value="AlaDh_PNT_C"/>
    <property type="match status" value="1"/>
</dbReference>
<dbReference type="Pfam" id="PF05222">
    <property type="entry name" value="AlaDh_PNT_N"/>
    <property type="match status" value="1"/>
</dbReference>
<dbReference type="SMART" id="SM01002">
    <property type="entry name" value="AlaDh_PNT_C"/>
    <property type="match status" value="1"/>
</dbReference>
<dbReference type="SMART" id="SM01003">
    <property type="entry name" value="AlaDh_PNT_N"/>
    <property type="match status" value="1"/>
</dbReference>
<dbReference type="SUPFAM" id="SSF52283">
    <property type="entry name" value="Formate/glycerate dehydrogenase catalytic domain-like"/>
    <property type="match status" value="2"/>
</dbReference>
<dbReference type="SUPFAM" id="SSF51735">
    <property type="entry name" value="NAD(P)-binding Rossmann-fold domains"/>
    <property type="match status" value="1"/>
</dbReference>
<dbReference type="PROSITE" id="PS00836">
    <property type="entry name" value="ALADH_PNT_1"/>
    <property type="match status" value="1"/>
</dbReference>
<dbReference type="PROSITE" id="PS00837">
    <property type="entry name" value="ALADH_PNT_2"/>
    <property type="match status" value="1"/>
</dbReference>
<gene>
    <name type="primary">pntAA</name>
    <name type="synonym">nntA1</name>
</gene>
<sequence>MKIAIPKERRPGEDRVAISPEVVKKLVGLGFEVIVEQGAGVGASITDDALTAAGATIASTAAQALSQADVVWKVQRPMTAEEGTDEVALIKEGAVLMCHLGALTNRPVVEALTKRKITAYAMELMPRISRAQSMDILSSQSNLAGYRAVIDGAYEFARAFPMMMTAAGTVPPARVLVFGVGVAGLQAIATAKRLGAVVMATDVRAATKEQVESLGGKFITVDDEAMKTAETAGGYAKEMGEEFRKKQAEAVLKELVKTDIAITTALIPGKPAPVLITEEMVTKMKPGSVIIDLAVEAGGNCPLSEPGKIVVKHGVKIVGHTNVPSRVAADASPLFAKNLLNFLTPHVDKDTKTLVMKLEDETVSGTCVTRDGAIVHPALTGQGA</sequence>
<comment type="function">
    <text evidence="1">The transhydrogenation between NADH and NADP is coupled to respiration and ATP hydrolysis and functions as a proton pump across the membrane.</text>
</comment>
<comment type="catalytic activity">
    <reaction evidence="2">
        <text>NAD(+) + NADPH + H(+)(in) = NADH + NADP(+) + H(+)(out)</text>
        <dbReference type="Rhea" id="RHEA:47992"/>
        <dbReference type="ChEBI" id="CHEBI:15378"/>
        <dbReference type="ChEBI" id="CHEBI:57540"/>
        <dbReference type="ChEBI" id="CHEBI:57783"/>
        <dbReference type="ChEBI" id="CHEBI:57945"/>
        <dbReference type="ChEBI" id="CHEBI:58349"/>
        <dbReference type="EC" id="7.1.1.1"/>
    </reaction>
</comment>
<comment type="subunit">
    <text evidence="1">Heterotrimer of two alpha chains and a beta (PntB) chain; in Rhodospirillum, the alpha chain is made of two subunits (PntAA and PntAB) and forms a dimer.</text>
</comment>
<comment type="similarity">
    <text evidence="3">Belongs to the AlaDH/PNT family.</text>
</comment>
<evidence type="ECO:0000250" key="1"/>
<evidence type="ECO:0000250" key="2">
    <source>
        <dbReference type="UniProtKB" id="Q2RSB2"/>
    </source>
</evidence>
<evidence type="ECO:0000305" key="3"/>
<proteinExistence type="inferred from homology"/>
<keyword id="KW-0520">NAD</keyword>
<keyword id="KW-0521">NADP</keyword>
<keyword id="KW-0547">Nucleotide-binding</keyword>
<keyword id="KW-1278">Translocase</keyword>
<name>PNTAA_RHORU</name>
<accession>P0C186</accession>
<accession>Q60164</accession>
<protein>
    <recommendedName>
        <fullName>NAD(P) transhydrogenase subunit alpha part 1</fullName>
        <ecNumber evidence="2">7.1.1.1</ecNumber>
    </recommendedName>
    <alternativeName>
        <fullName>Nicotinamide nucleotide transhydrogenase subunit alpha 1</fullName>
    </alternativeName>
    <alternativeName>
        <fullName>Proton-translocating transhydrogenase component 1</fullName>
    </alternativeName>
    <alternativeName>
        <fullName>Pyridine nucleotide transhydrogenase subunit alpha 1</fullName>
    </alternativeName>
    <alternativeName>
        <fullName>dI</fullName>
    </alternativeName>
</protein>
<organism>
    <name type="scientific">Rhodospirillum rubrum</name>
    <dbReference type="NCBI Taxonomy" id="1085"/>
    <lineage>
        <taxon>Bacteria</taxon>
        <taxon>Pseudomonadati</taxon>
        <taxon>Pseudomonadota</taxon>
        <taxon>Alphaproteobacteria</taxon>
        <taxon>Rhodospirillales</taxon>
        <taxon>Rhodospirillaceae</taxon>
        <taxon>Rhodospirillum</taxon>
    </lineage>
</organism>
<reference key="1">
    <citation type="journal article" date="1994" name="J. Bioenerg. Biomembr.">
        <title>Energy-transducing nicotinamide nucleotide transhydrogenase: nucleotide sequences of the genes and predicted amino acid sequences of the subunits of the enzyme from Rhodospirillum rubrum.</title>
        <authorList>
            <person name="Yamaguchi M."/>
            <person name="Hatefi Y."/>
        </authorList>
    </citation>
    <scope>NUCLEOTIDE SEQUENCE [GENOMIC DNA]</scope>
</reference>
<feature type="chain" id="PRO_0000199019" description="NAD(P) transhydrogenase subunit alpha part 1">
    <location>
        <begin position="1"/>
        <end position="384"/>
    </location>
</feature>
<feature type="binding site" evidence="1">
    <location>
        <begin position="132"/>
        <end position="135"/>
    </location>
    <ligand>
        <name>NAD(+)</name>
        <dbReference type="ChEBI" id="CHEBI:57540"/>
    </ligand>
</feature>
<feature type="binding site" evidence="1">
    <location>
        <position position="182"/>
    </location>
    <ligand>
        <name>NAD(+)</name>
        <dbReference type="ChEBI" id="CHEBI:57540"/>
    </ligand>
</feature>
<feature type="binding site" evidence="1">
    <location>
        <begin position="202"/>
        <end position="204"/>
    </location>
    <ligand>
        <name>NAD(+)</name>
        <dbReference type="ChEBI" id="CHEBI:57540"/>
    </ligand>
</feature>
<feature type="binding site" evidence="1">
    <location>
        <position position="234"/>
    </location>
    <ligand>
        <name>NAD(+)</name>
        <dbReference type="ChEBI" id="CHEBI:57540"/>
    </ligand>
</feature>